<proteinExistence type="evidence at protein level"/>
<keyword id="KW-0002">3D-structure</keyword>
<keyword id="KW-0076">Bacteriochlorophyll</keyword>
<keyword id="KW-0148">Chlorophyll</keyword>
<keyword id="KW-0151">Chlorosome</keyword>
<keyword id="KW-0157">Chromophore</keyword>
<keyword id="KW-0249">Electron transport</keyword>
<keyword id="KW-0460">Magnesium</keyword>
<keyword id="KW-0479">Metal-binding</keyword>
<keyword id="KW-0602">Photosynthesis</keyword>
<keyword id="KW-1185">Reference proteome</keyword>
<keyword id="KW-0813">Transport</keyword>
<accession>P0A314</accession>
<accession>Q46368</accession>
<accession>Q46467</accession>
<reference key="1">
    <citation type="journal article" date="1994" name="Photosyn. Res.">
        <title>Genes encoding two chlorosome components from the green sulfur bacteria Chlorobium vibrioforme strain 8327D and Chlorobium tepidum.</title>
        <authorList>
            <person name="Chung S."/>
            <person name="Frank G."/>
            <person name="Zuber H."/>
            <person name="Bryant D.A."/>
        </authorList>
    </citation>
    <scope>NUCLEOTIDE SEQUENCE [GENOMIC DNA]</scope>
</reference>
<reference key="2">
    <citation type="journal article" date="2002" name="Proc. Natl. Acad. Sci. U.S.A.">
        <title>The complete genome sequence of Chlorobium tepidum TLS, a photosynthetic, anaerobic, green-sulfur bacterium.</title>
        <authorList>
            <person name="Eisen J.A."/>
            <person name="Nelson K.E."/>
            <person name="Paulsen I.T."/>
            <person name="Heidelberg J.F."/>
            <person name="Wu M."/>
            <person name="Dodson R.J."/>
            <person name="DeBoy R.T."/>
            <person name="Gwinn M.L."/>
            <person name="Nelson W.C."/>
            <person name="Haft D.H."/>
            <person name="Hickey E.K."/>
            <person name="Peterson J.D."/>
            <person name="Durkin A.S."/>
            <person name="Kolonay J.F."/>
            <person name="Yang F."/>
            <person name="Holt I.E."/>
            <person name="Umayam L.A."/>
            <person name="Mason T.M."/>
            <person name="Brenner M."/>
            <person name="Shea T.P."/>
            <person name="Parksey D.S."/>
            <person name="Nierman W.C."/>
            <person name="Feldblyum T.V."/>
            <person name="Hansen C.L."/>
            <person name="Craven M.B."/>
            <person name="Radune D."/>
            <person name="Vamathevan J.J."/>
            <person name="Khouri H.M."/>
            <person name="White O."/>
            <person name="Gruber T.M."/>
            <person name="Ketchum K.A."/>
            <person name="Venter J.C."/>
            <person name="Tettelin H."/>
            <person name="Bryant D.A."/>
            <person name="Fraser C.M."/>
        </authorList>
    </citation>
    <scope>NUCLEOTIDE SEQUENCE [LARGE SCALE GENOMIC DNA]</scope>
    <source>
        <strain>ATCC 49652 / DSM 12025 / NBRC 103806 / TLS</strain>
    </source>
</reference>
<evidence type="ECO:0000255" key="1"/>
<evidence type="ECO:0000305" key="2"/>
<evidence type="ECO:0007829" key="3">
    <source>
        <dbReference type="PDB" id="2K37"/>
    </source>
</evidence>
<comment type="function">
    <text>Component of the photosynthetic apparatus. The light harvesting B740 complex binds bacteriochlorophyll c.</text>
</comment>
<comment type="subcellular location">
    <subcellularLocation>
        <location>Chlorosome</location>
        <location>Chlorosome envelope</location>
    </subcellularLocation>
</comment>
<comment type="similarity">
    <text evidence="2">Belongs to the BChl C/E-binding protein family.</text>
</comment>
<protein>
    <recommendedName>
        <fullName>Bacteriochlorophyll c-binding protein</fullName>
        <shortName>BChl c-binding</shortName>
    </recommendedName>
    <alternativeName>
        <fullName>Chlorosome protein A</fullName>
    </alternativeName>
</protein>
<dbReference type="EMBL" id="U09866">
    <property type="protein sequence ID" value="AAA18792.1"/>
    <property type="molecule type" value="Unassigned_DNA"/>
</dbReference>
<dbReference type="EMBL" id="AE006470">
    <property type="protein sequence ID" value="AAM73161.1"/>
    <property type="molecule type" value="Genomic_DNA"/>
</dbReference>
<dbReference type="RefSeq" id="NP_662819.1">
    <property type="nucleotide sequence ID" value="NC_002932.3"/>
</dbReference>
<dbReference type="RefSeq" id="WP_010933599.1">
    <property type="nucleotide sequence ID" value="NC_002932.3"/>
</dbReference>
<dbReference type="PDB" id="2K37">
    <property type="method" value="NMR"/>
    <property type="chains" value="A=1-59"/>
</dbReference>
<dbReference type="PDB" id="5LCB">
    <property type="method" value="Other"/>
    <property type="resolution" value="26.50 A"/>
    <property type="chains" value="A/B/C/D/E/F/G/H/I/J/K/L/M/N=1-59"/>
</dbReference>
<dbReference type="PDBsum" id="2K37"/>
<dbReference type="PDBsum" id="5LCB"/>
<dbReference type="BMRB" id="P0A314"/>
<dbReference type="EMDB" id="EMD-4033"/>
<dbReference type="SMR" id="P0A314"/>
<dbReference type="STRING" id="194439.CT1942"/>
<dbReference type="EnsemblBacteria" id="AAM73161">
    <property type="protein sequence ID" value="AAM73161"/>
    <property type="gene ID" value="CT1942"/>
</dbReference>
<dbReference type="KEGG" id="cte:CT1942"/>
<dbReference type="PATRIC" id="fig|194439.7.peg.1760"/>
<dbReference type="eggNOG" id="ENOG5032TTJ">
    <property type="taxonomic scope" value="Bacteria"/>
</dbReference>
<dbReference type="HOGENOM" id="CLU_194367_0_0_10"/>
<dbReference type="OrthoDB" id="595387at2"/>
<dbReference type="EvolutionaryTrace" id="P0A314"/>
<dbReference type="Proteomes" id="UP000001007">
    <property type="component" value="Chromosome"/>
</dbReference>
<dbReference type="GO" id="GO:0033105">
    <property type="term" value="C:chlorosome envelope"/>
    <property type="evidence" value="ECO:0007669"/>
    <property type="project" value="UniProtKB-SubCell"/>
</dbReference>
<dbReference type="GO" id="GO:0042314">
    <property type="term" value="F:bacteriochlorophyll binding"/>
    <property type="evidence" value="ECO:0007669"/>
    <property type="project" value="UniProtKB-KW"/>
</dbReference>
<dbReference type="GO" id="GO:0046872">
    <property type="term" value="F:metal ion binding"/>
    <property type="evidence" value="ECO:0007669"/>
    <property type="project" value="UniProtKB-KW"/>
</dbReference>
<dbReference type="GO" id="GO:0015979">
    <property type="term" value="P:photosynthesis"/>
    <property type="evidence" value="ECO:0007669"/>
    <property type="project" value="UniProtKB-KW"/>
</dbReference>
<dbReference type="Gene3D" id="1.20.5.950">
    <property type="entry name" value="bacteriochlorophyll c-binding protein"/>
    <property type="match status" value="1"/>
</dbReference>
<dbReference type="InterPro" id="IPR001470">
    <property type="entry name" value="Bchl_c-bd"/>
</dbReference>
<dbReference type="InterPro" id="IPR038387">
    <property type="entry name" value="Bchl_C-bd_sf"/>
</dbReference>
<dbReference type="Pfam" id="PF02043">
    <property type="entry name" value="Bac_chlorC"/>
    <property type="match status" value="1"/>
</dbReference>
<dbReference type="PIRSF" id="PIRSF002903">
    <property type="entry name" value="Bac_chlorC_bd"/>
    <property type="match status" value="1"/>
</dbReference>
<dbReference type="PRINTS" id="PR00656">
    <property type="entry name" value="BCHLROPHYLLC"/>
</dbReference>
<name>CSMA_CHLTE</name>
<organism>
    <name type="scientific">Chlorobaculum tepidum (strain ATCC 49652 / DSM 12025 / NBRC 103806 / TLS)</name>
    <name type="common">Chlorobium tepidum</name>
    <dbReference type="NCBI Taxonomy" id="194439"/>
    <lineage>
        <taxon>Bacteria</taxon>
        <taxon>Pseudomonadati</taxon>
        <taxon>Chlorobiota</taxon>
        <taxon>Chlorobiia</taxon>
        <taxon>Chlorobiales</taxon>
        <taxon>Chlorobiaceae</taxon>
        <taxon>Chlorobaculum</taxon>
    </lineage>
</organism>
<feature type="chain" id="PRO_0000002807" description="Bacteriochlorophyll c-binding protein">
    <location>
        <begin position="1"/>
        <end status="unknown"/>
    </location>
</feature>
<feature type="propeptide" id="PRO_0000002808" evidence="1">
    <location>
        <begin status="unknown"/>
        <end position="79"/>
    </location>
</feature>
<feature type="binding site" description="axial binding residue" evidence="1">
    <location>
        <position position="25"/>
    </location>
    <ligand>
        <name>a bacteriochlorophyll c</name>
        <dbReference type="ChEBI" id="CHEBI:60197"/>
    </ligand>
    <ligandPart>
        <name>Mg</name>
        <dbReference type="ChEBI" id="CHEBI:25107"/>
    </ligandPart>
</feature>
<feature type="helix" evidence="3">
    <location>
        <begin position="5"/>
        <end position="32"/>
    </location>
</feature>
<feature type="turn" evidence="3">
    <location>
        <begin position="33"/>
        <end position="39"/>
    </location>
</feature>
<feature type="helix" evidence="3">
    <location>
        <begin position="40"/>
        <end position="46"/>
    </location>
</feature>
<feature type="turn" evidence="3">
    <location>
        <begin position="47"/>
        <end position="50"/>
    </location>
</feature>
<feature type="helix" evidence="3">
    <location>
        <begin position="51"/>
        <end position="55"/>
    </location>
</feature>
<gene>
    <name type="primary">csmA</name>
    <name type="ordered locus">CT1942</name>
</gene>
<sequence length="79" mass="8289">MSGGGVFTDILAAAGRIFEVMVEGHWETVGMLFDSLGKGTMRINRNAYGSMGGGSLRGSSPEVSGYAVPTKEVESKFAK</sequence>